<keyword id="KW-0030">Aminoacyl-tRNA synthetase</keyword>
<keyword id="KW-0067">ATP-binding</keyword>
<keyword id="KW-0963">Cytoplasm</keyword>
<keyword id="KW-0436">Ligase</keyword>
<keyword id="KW-0460">Magnesium</keyword>
<keyword id="KW-0479">Metal-binding</keyword>
<keyword id="KW-0547">Nucleotide-binding</keyword>
<keyword id="KW-0648">Protein biosynthesis</keyword>
<keyword id="KW-1185">Reference proteome</keyword>
<name>SYFB_SULTO</name>
<protein>
    <recommendedName>
        <fullName evidence="1">Phenylalanine--tRNA ligase beta subunit</fullName>
        <ecNumber evidence="1">6.1.1.20</ecNumber>
    </recommendedName>
    <alternativeName>
        <fullName evidence="1">Phenylalanyl-tRNA synthetase beta subunit</fullName>
        <shortName evidence="1">PheRS</shortName>
    </alternativeName>
</protein>
<sequence length="540" mass="61519">MPTINIYKWRLLNELKISETQLEDLLFNLKSEMKPIDQDHIEIEINNDRPDLLFVYGIIRSIKGLLKKELGEPRYSVKDTDYVFEIKEVPSRPYALAAVVEDIKFDDELLKELIQFQEKLHITVGRKRKKIAIGLHDLKKIDSKHIIYTTVNLDYKFIPLNSDKEMSVREILESTPQGKEYGNISLLDGKMPAIMQDDGQILSLPPVINSEKTRINSKTQSLFIDVTGTSLDTVIFTLDVIVTNLAEMGGKIGRIKVISPYVDNSPLLQHKSIKITAEYINKILGTNLNKNEIIEYLKMARFDVNDLGKEIEVIIPPYRNDILSQIDITEEVAITYGYNNLSPTPYKIEKIGSLSDRTKLIRVLRDLSVGGGFTEIFTFTLISESLLLGDFVKILNPITVDYNSVRNSLLPSILIFLSKNQHARMPIRVFEIGDVVIRNENTETGYSNKLNAAYAIMNSRVSFEELQAPLHEILNSLGINPIYKRDTNPLFIEGRTASIYANNKKIGIIGEINPNILEKIDIEYPIVMSEIYLDEIKDIL</sequence>
<organism>
    <name type="scientific">Sulfurisphaera tokodaii (strain DSM 16993 / JCM 10545 / NBRC 100140 / 7)</name>
    <name type="common">Sulfolobus tokodaii</name>
    <dbReference type="NCBI Taxonomy" id="273063"/>
    <lineage>
        <taxon>Archaea</taxon>
        <taxon>Thermoproteota</taxon>
        <taxon>Thermoprotei</taxon>
        <taxon>Sulfolobales</taxon>
        <taxon>Sulfolobaceae</taxon>
        <taxon>Sulfurisphaera</taxon>
    </lineage>
</organism>
<evidence type="ECO:0000255" key="1">
    <source>
        <dbReference type="HAMAP-Rule" id="MF_00284"/>
    </source>
</evidence>
<gene>
    <name evidence="1" type="primary">pheT</name>
    <name type="ordered locus">STK_14150</name>
</gene>
<accession>Q971D8</accession>
<accession>F9VP53</accession>
<reference key="1">
    <citation type="journal article" date="2001" name="DNA Res.">
        <title>Complete genome sequence of an aerobic thermoacidophilic Crenarchaeon, Sulfolobus tokodaii strain7.</title>
        <authorList>
            <person name="Kawarabayasi Y."/>
            <person name="Hino Y."/>
            <person name="Horikawa H."/>
            <person name="Jin-no K."/>
            <person name="Takahashi M."/>
            <person name="Sekine M."/>
            <person name="Baba S."/>
            <person name="Ankai A."/>
            <person name="Kosugi H."/>
            <person name="Hosoyama A."/>
            <person name="Fukui S."/>
            <person name="Nagai Y."/>
            <person name="Nishijima K."/>
            <person name="Otsuka R."/>
            <person name="Nakazawa H."/>
            <person name="Takamiya M."/>
            <person name="Kato Y."/>
            <person name="Yoshizawa T."/>
            <person name="Tanaka T."/>
            <person name="Kudoh Y."/>
            <person name="Yamazaki J."/>
            <person name="Kushida N."/>
            <person name="Oguchi A."/>
            <person name="Aoki K."/>
            <person name="Masuda S."/>
            <person name="Yanagii M."/>
            <person name="Nishimura M."/>
            <person name="Yamagishi A."/>
            <person name="Oshima T."/>
            <person name="Kikuchi H."/>
        </authorList>
    </citation>
    <scope>NUCLEOTIDE SEQUENCE [LARGE SCALE GENOMIC DNA]</scope>
    <source>
        <strain>DSM 16993 / JCM 10545 / NBRC 100140 / 7</strain>
    </source>
</reference>
<feature type="chain" id="PRO_0000127013" description="Phenylalanine--tRNA ligase beta subunit">
    <location>
        <begin position="1"/>
        <end position="540"/>
    </location>
</feature>
<feature type="domain" description="B5" evidence="1">
    <location>
        <begin position="268"/>
        <end position="343"/>
    </location>
</feature>
<feature type="binding site" evidence="1">
    <location>
        <position position="321"/>
    </location>
    <ligand>
        <name>Mg(2+)</name>
        <dbReference type="ChEBI" id="CHEBI:18420"/>
        <note>shared with alpha subunit</note>
    </ligand>
</feature>
<feature type="binding site" evidence="1">
    <location>
        <position position="327"/>
    </location>
    <ligand>
        <name>Mg(2+)</name>
        <dbReference type="ChEBI" id="CHEBI:18420"/>
        <note>shared with alpha subunit</note>
    </ligand>
</feature>
<feature type="binding site" evidence="1">
    <location>
        <position position="330"/>
    </location>
    <ligand>
        <name>Mg(2+)</name>
        <dbReference type="ChEBI" id="CHEBI:18420"/>
        <note>shared with alpha subunit</note>
    </ligand>
</feature>
<feature type="binding site" evidence="1">
    <location>
        <position position="331"/>
    </location>
    <ligand>
        <name>Mg(2+)</name>
        <dbReference type="ChEBI" id="CHEBI:18420"/>
        <note>shared with alpha subunit</note>
    </ligand>
</feature>
<proteinExistence type="inferred from homology"/>
<comment type="catalytic activity">
    <reaction evidence="1">
        <text>tRNA(Phe) + L-phenylalanine + ATP = L-phenylalanyl-tRNA(Phe) + AMP + diphosphate + H(+)</text>
        <dbReference type="Rhea" id="RHEA:19413"/>
        <dbReference type="Rhea" id="RHEA-COMP:9668"/>
        <dbReference type="Rhea" id="RHEA-COMP:9699"/>
        <dbReference type="ChEBI" id="CHEBI:15378"/>
        <dbReference type="ChEBI" id="CHEBI:30616"/>
        <dbReference type="ChEBI" id="CHEBI:33019"/>
        <dbReference type="ChEBI" id="CHEBI:58095"/>
        <dbReference type="ChEBI" id="CHEBI:78442"/>
        <dbReference type="ChEBI" id="CHEBI:78531"/>
        <dbReference type="ChEBI" id="CHEBI:456215"/>
        <dbReference type="EC" id="6.1.1.20"/>
    </reaction>
</comment>
<comment type="cofactor">
    <cofactor evidence="1">
        <name>Mg(2+)</name>
        <dbReference type="ChEBI" id="CHEBI:18420"/>
    </cofactor>
</comment>
<comment type="subunit">
    <text evidence="1">Tetramer of two alpha and two beta subunits.</text>
</comment>
<comment type="subcellular location">
    <subcellularLocation>
        <location evidence="1">Cytoplasm</location>
    </subcellularLocation>
</comment>
<comment type="similarity">
    <text evidence="1">Belongs to the phenylalanyl-tRNA synthetase beta subunit family. Type 2 subfamily.</text>
</comment>
<dbReference type="EC" id="6.1.1.20" evidence="1"/>
<dbReference type="EMBL" id="BA000023">
    <property type="protein sequence ID" value="BAK54561.1"/>
    <property type="molecule type" value="Genomic_DNA"/>
</dbReference>
<dbReference type="RefSeq" id="WP_010979460.1">
    <property type="nucleotide sequence ID" value="NC_003106.2"/>
</dbReference>
<dbReference type="SMR" id="Q971D8"/>
<dbReference type="STRING" id="273063.STK_14150"/>
<dbReference type="GeneID" id="1459444"/>
<dbReference type="KEGG" id="sto:STK_14150"/>
<dbReference type="PATRIC" id="fig|273063.9.peg.1615"/>
<dbReference type="eggNOG" id="arCOG00412">
    <property type="taxonomic scope" value="Archaea"/>
</dbReference>
<dbReference type="OrthoDB" id="10073at2157"/>
<dbReference type="Proteomes" id="UP000001015">
    <property type="component" value="Chromosome"/>
</dbReference>
<dbReference type="GO" id="GO:0009328">
    <property type="term" value="C:phenylalanine-tRNA ligase complex"/>
    <property type="evidence" value="ECO:0007669"/>
    <property type="project" value="TreeGrafter"/>
</dbReference>
<dbReference type="GO" id="GO:0005524">
    <property type="term" value="F:ATP binding"/>
    <property type="evidence" value="ECO:0007669"/>
    <property type="project" value="UniProtKB-UniRule"/>
</dbReference>
<dbReference type="GO" id="GO:0000287">
    <property type="term" value="F:magnesium ion binding"/>
    <property type="evidence" value="ECO:0007669"/>
    <property type="project" value="InterPro"/>
</dbReference>
<dbReference type="GO" id="GO:0004826">
    <property type="term" value="F:phenylalanine-tRNA ligase activity"/>
    <property type="evidence" value="ECO:0007669"/>
    <property type="project" value="UniProtKB-UniRule"/>
</dbReference>
<dbReference type="GO" id="GO:0003723">
    <property type="term" value="F:RNA binding"/>
    <property type="evidence" value="ECO:0007669"/>
    <property type="project" value="InterPro"/>
</dbReference>
<dbReference type="GO" id="GO:0006432">
    <property type="term" value="P:phenylalanyl-tRNA aminoacylation"/>
    <property type="evidence" value="ECO:0007669"/>
    <property type="project" value="UniProtKB-UniRule"/>
</dbReference>
<dbReference type="CDD" id="cd00769">
    <property type="entry name" value="PheRS_beta_core"/>
    <property type="match status" value="1"/>
</dbReference>
<dbReference type="Gene3D" id="3.30.56.10">
    <property type="match status" value="2"/>
</dbReference>
<dbReference type="Gene3D" id="3.30.930.10">
    <property type="entry name" value="Bira Bifunctional Protein, Domain 2"/>
    <property type="match status" value="1"/>
</dbReference>
<dbReference type="Gene3D" id="3.50.40.10">
    <property type="entry name" value="Phenylalanyl-trna Synthetase, Chain B, domain 3"/>
    <property type="match status" value="1"/>
</dbReference>
<dbReference type="HAMAP" id="MF_00284">
    <property type="entry name" value="Phe_tRNA_synth_beta2"/>
    <property type="match status" value="1"/>
</dbReference>
<dbReference type="InterPro" id="IPR045864">
    <property type="entry name" value="aa-tRNA-synth_II/BPL/LPL"/>
</dbReference>
<dbReference type="InterPro" id="IPR005146">
    <property type="entry name" value="B3/B4_tRNA-bd"/>
</dbReference>
<dbReference type="InterPro" id="IPR009061">
    <property type="entry name" value="DNA-bd_dom_put_sf"/>
</dbReference>
<dbReference type="InterPro" id="IPR045060">
    <property type="entry name" value="Phe-tRNA-ligase_IIc_bsu"/>
</dbReference>
<dbReference type="InterPro" id="IPR004531">
    <property type="entry name" value="Phe-tRNA-synth_IIc_bsu_arc_euk"/>
</dbReference>
<dbReference type="InterPro" id="IPR020825">
    <property type="entry name" value="Phe-tRNA_synthase-like_B3/B4"/>
</dbReference>
<dbReference type="InterPro" id="IPR022918">
    <property type="entry name" value="Phe_tRNA_ligase_beta2_arc"/>
</dbReference>
<dbReference type="InterPro" id="IPR041616">
    <property type="entry name" value="PheRS_beta_core"/>
</dbReference>
<dbReference type="InterPro" id="IPR005147">
    <property type="entry name" value="tRNA_synthase_B5-dom"/>
</dbReference>
<dbReference type="NCBIfam" id="TIGR00471">
    <property type="entry name" value="pheT_arch"/>
    <property type="match status" value="1"/>
</dbReference>
<dbReference type="PANTHER" id="PTHR10947:SF0">
    <property type="entry name" value="PHENYLALANINE--TRNA LIGASE BETA SUBUNIT"/>
    <property type="match status" value="1"/>
</dbReference>
<dbReference type="PANTHER" id="PTHR10947">
    <property type="entry name" value="PHENYLALANYL-TRNA SYNTHETASE BETA CHAIN AND LEUCINE-RICH REPEAT-CONTAINING PROTEIN 47"/>
    <property type="match status" value="1"/>
</dbReference>
<dbReference type="Pfam" id="PF03484">
    <property type="entry name" value="B5"/>
    <property type="match status" value="1"/>
</dbReference>
<dbReference type="Pfam" id="PF17759">
    <property type="entry name" value="tRNA_synthFbeta"/>
    <property type="match status" value="1"/>
</dbReference>
<dbReference type="SMART" id="SM00873">
    <property type="entry name" value="B3_4"/>
    <property type="match status" value="1"/>
</dbReference>
<dbReference type="SMART" id="SM00874">
    <property type="entry name" value="B5"/>
    <property type="match status" value="1"/>
</dbReference>
<dbReference type="SUPFAM" id="SSF55681">
    <property type="entry name" value="Class II aaRS and biotin synthetases"/>
    <property type="match status" value="1"/>
</dbReference>
<dbReference type="SUPFAM" id="SSF46955">
    <property type="entry name" value="Putative DNA-binding domain"/>
    <property type="match status" value="2"/>
</dbReference>
<dbReference type="PROSITE" id="PS51483">
    <property type="entry name" value="B5"/>
    <property type="match status" value="1"/>
</dbReference>